<sequence>MRKSFYTWLMAQRNPKSNEPVAILADLAFEDSTFPKHTDDFEEVSRYLEDHASFSFNLGQFDQIWEDYLAH</sequence>
<accession>Q56SA8</accession>
<reference key="1">
    <citation type="journal article" date="2005" name="J. Bacteriol.">
        <title>cse, a chimeric and variable gene, encodes an extracellular protein involved in cellular segregation in Streptococcus thermophilus.</title>
        <authorList>
            <person name="Borges F."/>
            <person name="Layec S."/>
            <person name="Thibessard A."/>
            <person name="Fernandez A."/>
            <person name="Gintz B."/>
            <person name="Hols P."/>
            <person name="Decaris B."/>
            <person name="Leblond-Bourget N."/>
        </authorList>
    </citation>
    <scope>NUCLEOTIDE SEQUENCE [GENOMIC DNA]</scope>
    <source>
        <strain>CNRZ 368</strain>
    </source>
</reference>
<feature type="chain" id="PRO_0000164302" description="UPF0346 protein in cse 5'region">
    <location>
        <begin position="1"/>
        <end position="71"/>
    </location>
</feature>
<comment type="similarity">
    <text evidence="1">Belongs to the UPF0346 family.</text>
</comment>
<protein>
    <recommendedName>
        <fullName>UPF0346 protein in cse 5'region</fullName>
    </recommendedName>
</protein>
<dbReference type="EMBL" id="AY695844">
    <property type="protein sequence ID" value="AAW33691.1"/>
    <property type="molecule type" value="Genomic_DNA"/>
</dbReference>
<dbReference type="RefSeq" id="WP_002944188.1">
    <property type="nucleotide sequence ID" value="NZ_WMLD01000004.1"/>
</dbReference>
<dbReference type="SMR" id="Q56SA8"/>
<dbReference type="GeneID" id="66898355"/>
<dbReference type="eggNOG" id="COG4479">
    <property type="taxonomic scope" value="Bacteria"/>
</dbReference>
<dbReference type="OMA" id="WLMTNRN"/>
<dbReference type="OrthoDB" id="2242851at2"/>
<dbReference type="Gene3D" id="1.10.150.260">
    <property type="entry name" value="YozE SAM-like"/>
    <property type="match status" value="1"/>
</dbReference>
<dbReference type="HAMAP" id="MF_01538">
    <property type="entry name" value="UPF0346"/>
    <property type="match status" value="1"/>
</dbReference>
<dbReference type="InterPro" id="IPR010673">
    <property type="entry name" value="UPF0346"/>
</dbReference>
<dbReference type="InterPro" id="IPR023089">
    <property type="entry name" value="YozE_SAM-like"/>
</dbReference>
<dbReference type="InterPro" id="IPR036806">
    <property type="entry name" value="YozE_SAM-like_sf"/>
</dbReference>
<dbReference type="NCBIfam" id="NF010193">
    <property type="entry name" value="PRK13672.1"/>
    <property type="match status" value="1"/>
</dbReference>
<dbReference type="Pfam" id="PF06855">
    <property type="entry name" value="YozE_SAM_like"/>
    <property type="match status" value="1"/>
</dbReference>
<dbReference type="PIRSF" id="PIRSF037262">
    <property type="entry name" value="UCP037262"/>
    <property type="match status" value="1"/>
</dbReference>
<dbReference type="SUPFAM" id="SSF140652">
    <property type="entry name" value="YozE-like"/>
    <property type="match status" value="1"/>
</dbReference>
<name>YCSE_STRTR</name>
<evidence type="ECO:0000305" key="1"/>
<organism>
    <name type="scientific">Streptococcus thermophilus</name>
    <dbReference type="NCBI Taxonomy" id="1308"/>
    <lineage>
        <taxon>Bacteria</taxon>
        <taxon>Bacillati</taxon>
        <taxon>Bacillota</taxon>
        <taxon>Bacilli</taxon>
        <taxon>Lactobacillales</taxon>
        <taxon>Streptococcaceae</taxon>
        <taxon>Streptococcus</taxon>
    </lineage>
</organism>
<proteinExistence type="inferred from homology"/>